<feature type="chain" id="PRO_0000097570" description="Protein Smaug homolog 1">
    <location>
        <begin position="1"/>
        <end position="718"/>
    </location>
</feature>
<feature type="domain" description="SAM">
    <location>
        <begin position="323"/>
        <end position="391"/>
    </location>
</feature>
<feature type="region of interest" description="Disordered" evidence="4">
    <location>
        <begin position="278"/>
        <end position="323"/>
    </location>
</feature>
<feature type="region of interest" description="Disordered" evidence="4">
    <location>
        <begin position="416"/>
        <end position="474"/>
    </location>
</feature>
<feature type="region of interest" description="Disordered" evidence="4">
    <location>
        <begin position="572"/>
        <end position="601"/>
    </location>
</feature>
<feature type="compositionally biased region" description="Low complexity" evidence="4">
    <location>
        <begin position="453"/>
        <end position="466"/>
    </location>
</feature>
<feature type="modified residue" description="Phosphoserine" evidence="11">
    <location>
        <position position="168"/>
    </location>
</feature>
<feature type="modified residue" description="Phosphoserine" evidence="10">
    <location>
        <position position="420"/>
    </location>
</feature>
<feature type="modified residue" description="Phosphothreonine" evidence="10">
    <location>
        <position position="424"/>
    </location>
</feature>
<feature type="modified residue" description="Omega-N-methylarginine" evidence="3">
    <location>
        <position position="573"/>
    </location>
</feature>
<feature type="modified residue" description="Phosphoserine" evidence="2">
    <location>
        <position position="580"/>
    </location>
</feature>
<feature type="splice variant" id="VSP_037778" description="In isoform 2." evidence="8">
    <location>
        <begin position="1"/>
        <end position="101"/>
    </location>
</feature>
<feature type="splice variant" id="VSP_037779" description="In isoform 3." evidence="6 7">
    <original>ILSGQAHHSPLKRSVSLTPPMNVPNQPLGHGWMSHEDLRARGPQCLPSDHAPLSPQSSVASSGSGGSEHLEDQTTARNTFQEEGSGMKD</original>
    <variation>N</variation>
    <location>
        <begin position="239"/>
        <end position="327"/>
    </location>
</feature>
<feature type="sequence conflict" description="In Ref. 3; AAH57838." evidence="9" ref="3">
    <original>I</original>
    <variation>T</variation>
    <location>
        <position position="108"/>
    </location>
</feature>
<feature type="sequence conflict" description="In Ref. 4; AK024652." evidence="9" ref="4">
    <original>E</original>
    <variation>K</variation>
    <location>
        <position position="138"/>
    </location>
</feature>
<feature type="helix" evidence="12">
    <location>
        <begin position="2"/>
        <end position="16"/>
    </location>
</feature>
<feature type="helix" evidence="12">
    <location>
        <begin position="19"/>
        <end position="30"/>
    </location>
</feature>
<feature type="helix" evidence="12">
    <location>
        <begin position="35"/>
        <end position="49"/>
    </location>
</feature>
<feature type="helix" evidence="12">
    <location>
        <begin position="53"/>
        <end position="62"/>
    </location>
</feature>
<feature type="helix" evidence="12">
    <location>
        <begin position="65"/>
        <end position="70"/>
    </location>
</feature>
<feature type="helix" evidence="12">
    <location>
        <begin position="71"/>
        <end position="73"/>
    </location>
</feature>
<feature type="helix" evidence="12">
    <location>
        <begin position="76"/>
        <end position="86"/>
    </location>
</feature>
<feature type="helix" evidence="12">
    <location>
        <begin position="87"/>
        <end position="89"/>
    </location>
</feature>
<feature type="helix" evidence="12">
    <location>
        <begin position="95"/>
        <end position="115"/>
    </location>
</feature>
<feature type="helix" evidence="12">
    <location>
        <begin position="119"/>
        <end position="131"/>
    </location>
</feature>
<feature type="helix" evidence="12">
    <location>
        <begin position="137"/>
        <end position="154"/>
    </location>
</feature>
<sequence>MMFRDQVGVLAGWFKGWNECEQTVALLSLLKRVSQTQARFLQLCLEHSLADCAELHVLEREANSPGIINQWQQESKDKVISLLLTHLPLLKPGNLDAKVEYMKLLPKILAHSIEHNQHIEESRQLLSYALIHPATSLEDRSALAMWLNHLEDRTSTSFGGQNRGRSDSVDYGQTHYYHQRQNSDDKLNGWQNSRDSGICINASNWQDKSMGCENGHVPLYSSSSVPTTINTIGTSTSTILSGQAHHSPLKRSVSLTPPMNVPNQPLGHGWMSHEDLRARGPQCLPSDHAPLSPQSSVASSGSGGSEHLEDQTTARNTFQEEGSGMKDVPAWLKSLRLHKYAALFSQMTYEEMMALTECQLEAQNVTKGARHKIVISIQKLKERQNLLKSLERDIIEGGSLRIPLQELHQMILTPIKAYSSPSTTPEARRREPQAPRQPSLMGPESQSPDCKDGAAATGATATPSAGASGGLQPHQLSSCDGELAVAPLPEGDLPGQFTRVMGKVCTQLLVSRPDEENISSYLQLIDKCLIHEAFTETQKKRLLSWKQQVQKLFRSFPRKTLLDISGYRQQRNRGFGQSNSLPTAGSVGGGMGRRNPRQYQIPSRNVPSARLGLLGTSGFVSSNQRNTTATPTIMKQGRQNLWFANPGGSNSMPSRTHSSVQRTRSLPVHTSPQNMLMFQQPEFQLPVTEPDINNRLESLCLSMTEHALGDGVDRTSTI</sequence>
<protein>
    <recommendedName>
        <fullName>Protein Smaug homolog 1</fullName>
        <shortName>Smaug 1</shortName>
        <shortName>hSmaug1</shortName>
    </recommendedName>
    <alternativeName>
        <fullName>Sterile alpha motif domain-containing protein 4A</fullName>
        <shortName>SAM domain-containing protein 4A</shortName>
    </alternativeName>
</protein>
<evidence type="ECO:0000250" key="1"/>
<evidence type="ECO:0000250" key="2">
    <source>
        <dbReference type="UniProtKB" id="B5DF21"/>
    </source>
</evidence>
<evidence type="ECO:0000250" key="3">
    <source>
        <dbReference type="UniProtKB" id="Q8CBY1"/>
    </source>
</evidence>
<evidence type="ECO:0000256" key="4">
    <source>
        <dbReference type="SAM" id="MobiDB-lite"/>
    </source>
</evidence>
<evidence type="ECO:0000269" key="5">
    <source>
    </source>
</evidence>
<evidence type="ECO:0000303" key="6">
    <source>
    </source>
</evidence>
<evidence type="ECO:0000303" key="7">
    <source>
    </source>
</evidence>
<evidence type="ECO:0000303" key="8">
    <source ref="2"/>
</evidence>
<evidence type="ECO:0000305" key="9"/>
<evidence type="ECO:0007744" key="10">
    <source>
    </source>
</evidence>
<evidence type="ECO:0007744" key="11">
    <source>
    </source>
</evidence>
<evidence type="ECO:0007829" key="12">
    <source>
        <dbReference type="PDB" id="8OIK"/>
    </source>
</evidence>
<dbReference type="EMBL" id="AL133444">
    <property type="status" value="NOT_ANNOTATED_CDS"/>
    <property type="molecule type" value="Genomic_DNA"/>
</dbReference>
<dbReference type="EMBL" id="AL138994">
    <property type="status" value="NOT_ANNOTATED_CDS"/>
    <property type="molecule type" value="Genomic_DNA"/>
</dbReference>
<dbReference type="EMBL" id="AL359792">
    <property type="status" value="NOT_ANNOTATED_CDS"/>
    <property type="molecule type" value="Genomic_DNA"/>
</dbReference>
<dbReference type="EMBL" id="AF429970">
    <property type="protein sequence ID" value="AAP97302.1"/>
    <property type="status" value="ALT_SEQ"/>
    <property type="molecule type" value="mRNA"/>
</dbReference>
<dbReference type="EMBL" id="BC057838">
    <property type="protein sequence ID" value="AAH57838.1"/>
    <property type="status" value="ALT_SEQ"/>
    <property type="molecule type" value="mRNA"/>
</dbReference>
<dbReference type="EMBL" id="BC121173">
    <property type="protein sequence ID" value="AAI21174.1"/>
    <property type="molecule type" value="mRNA"/>
</dbReference>
<dbReference type="EMBL" id="BC121174">
    <property type="protein sequence ID" value="AAI21175.1"/>
    <property type="molecule type" value="mRNA"/>
</dbReference>
<dbReference type="EMBL" id="AK024652">
    <property type="status" value="NOT_ANNOTATED_CDS"/>
    <property type="molecule type" value="mRNA"/>
</dbReference>
<dbReference type="EMBL" id="AB028976">
    <property type="protein sequence ID" value="BAA83005.1"/>
    <property type="molecule type" value="mRNA"/>
</dbReference>
<dbReference type="CCDS" id="CCDS32084.2">
    <molecule id="Q9UPU9-1"/>
</dbReference>
<dbReference type="CCDS" id="CCDS55917.2">
    <molecule id="Q9UPU9-3"/>
</dbReference>
<dbReference type="RefSeq" id="NP_001155048.2">
    <molecule id="Q9UPU9-3"/>
    <property type="nucleotide sequence ID" value="NM_001161576.2"/>
</dbReference>
<dbReference type="RefSeq" id="NP_001155049.1">
    <property type="nucleotide sequence ID" value="NM_001161577.1"/>
</dbReference>
<dbReference type="RefSeq" id="NP_056404.4">
    <molecule id="Q9UPU9-1"/>
    <property type="nucleotide sequence ID" value="NM_015589.6"/>
</dbReference>
<dbReference type="RefSeq" id="XP_047287094.1">
    <molecule id="Q9UPU9-1"/>
    <property type="nucleotide sequence ID" value="XM_047431138.1"/>
</dbReference>
<dbReference type="RefSeq" id="XP_047287095.1">
    <molecule id="Q9UPU9-1"/>
    <property type="nucleotide sequence ID" value="XM_047431139.1"/>
</dbReference>
<dbReference type="RefSeq" id="XP_047287100.1">
    <molecule id="Q9UPU9-3"/>
    <property type="nucleotide sequence ID" value="XM_047431144.1"/>
</dbReference>
<dbReference type="RefSeq" id="XP_047287101.1">
    <molecule id="Q9UPU9-3"/>
    <property type="nucleotide sequence ID" value="XM_047431145.1"/>
</dbReference>
<dbReference type="RefSeq" id="XP_047287102.1">
    <molecule id="Q9UPU9-3"/>
    <property type="nucleotide sequence ID" value="XM_047431146.1"/>
</dbReference>
<dbReference type="PDB" id="8OIK">
    <property type="method" value="X-ray"/>
    <property type="resolution" value="1.62 A"/>
    <property type="chains" value="A/B/C=2-156"/>
</dbReference>
<dbReference type="PDBsum" id="8OIK"/>
<dbReference type="SMR" id="Q9UPU9"/>
<dbReference type="BioGRID" id="116673">
    <property type="interactions" value="44"/>
</dbReference>
<dbReference type="FunCoup" id="Q9UPU9">
    <property type="interactions" value="1066"/>
</dbReference>
<dbReference type="IntAct" id="Q9UPU9">
    <property type="interactions" value="41"/>
</dbReference>
<dbReference type="MINT" id="Q9UPU9"/>
<dbReference type="STRING" id="9606.ENSP00000452535"/>
<dbReference type="GlyGen" id="Q9UPU9">
    <property type="glycosylation" value="2 sites, 1 O-linked glycan (1 site)"/>
</dbReference>
<dbReference type="iPTMnet" id="Q9UPU9"/>
<dbReference type="PhosphoSitePlus" id="Q9UPU9"/>
<dbReference type="SwissPalm" id="Q9UPU9"/>
<dbReference type="BioMuta" id="SAMD4A"/>
<dbReference type="DMDM" id="254763391"/>
<dbReference type="jPOST" id="Q9UPU9"/>
<dbReference type="MassIVE" id="Q9UPU9"/>
<dbReference type="PaxDb" id="9606-ENSP00000375919"/>
<dbReference type="PeptideAtlas" id="Q9UPU9"/>
<dbReference type="ProteomicsDB" id="85450">
    <molecule id="Q9UPU9-1"/>
</dbReference>
<dbReference type="ProteomicsDB" id="85451">
    <molecule id="Q9UPU9-2"/>
</dbReference>
<dbReference type="ProteomicsDB" id="85452">
    <molecule id="Q9UPU9-3"/>
</dbReference>
<dbReference type="Pumba" id="Q9UPU9"/>
<dbReference type="Antibodypedia" id="23948">
    <property type="antibodies" value="91 antibodies from 22 providers"/>
</dbReference>
<dbReference type="DNASU" id="23034"/>
<dbReference type="Ensembl" id="ENST00000251091.9">
    <molecule id="Q9UPU9-3"/>
    <property type="protein sequence ID" value="ENSP00000251091.5"/>
    <property type="gene ID" value="ENSG00000020577.14"/>
</dbReference>
<dbReference type="Ensembl" id="ENST00000392067.7">
    <molecule id="Q9UPU9-1"/>
    <property type="protein sequence ID" value="ENSP00000375919.3"/>
    <property type="gene ID" value="ENSG00000020577.14"/>
</dbReference>
<dbReference type="Ensembl" id="ENST00000554335.6">
    <molecule id="Q9UPU9-1"/>
    <property type="protein sequence ID" value="ENSP00000452535.1"/>
    <property type="gene ID" value="ENSG00000020577.14"/>
</dbReference>
<dbReference type="GeneID" id="23034"/>
<dbReference type="KEGG" id="hsa:23034"/>
<dbReference type="MANE-Select" id="ENST00000554335.6">
    <property type="protein sequence ID" value="ENSP00000452535.1"/>
    <property type="RefSeq nucleotide sequence ID" value="NM_015589.6"/>
    <property type="RefSeq protein sequence ID" value="NP_056404.4"/>
</dbReference>
<dbReference type="UCSC" id="uc001xbb.4">
    <molecule id="Q9UPU9-1"/>
    <property type="organism name" value="human"/>
</dbReference>
<dbReference type="AGR" id="HGNC:23023"/>
<dbReference type="CTD" id="23034"/>
<dbReference type="DisGeNET" id="23034"/>
<dbReference type="GeneCards" id="SAMD4A"/>
<dbReference type="HGNC" id="HGNC:23023">
    <property type="gene designation" value="SAMD4A"/>
</dbReference>
<dbReference type="HPA" id="ENSG00000020577">
    <property type="expression patterns" value="Tissue enhanced (brain, skeletal muscle, testis)"/>
</dbReference>
<dbReference type="MIM" id="610747">
    <property type="type" value="gene"/>
</dbReference>
<dbReference type="neXtProt" id="NX_Q9UPU9"/>
<dbReference type="OpenTargets" id="ENSG00000020577"/>
<dbReference type="PharmGKB" id="PA128394596"/>
<dbReference type="VEuPathDB" id="HostDB:ENSG00000020577"/>
<dbReference type="eggNOG" id="KOG3791">
    <property type="taxonomic scope" value="Eukaryota"/>
</dbReference>
<dbReference type="GeneTree" id="ENSGT00940000157933"/>
<dbReference type="HOGENOM" id="CLU_016365_0_1_1"/>
<dbReference type="InParanoid" id="Q9UPU9"/>
<dbReference type="OMA" id="NTSNWQD"/>
<dbReference type="OrthoDB" id="2155283at2759"/>
<dbReference type="PAN-GO" id="Q9UPU9">
    <property type="GO annotations" value="4 GO annotations based on evolutionary models"/>
</dbReference>
<dbReference type="PhylomeDB" id="Q9UPU9"/>
<dbReference type="TreeFam" id="TF324165"/>
<dbReference type="PathwayCommons" id="Q9UPU9"/>
<dbReference type="SignaLink" id="Q9UPU9"/>
<dbReference type="BioGRID-ORCS" id="23034">
    <property type="hits" value="43 hits in 1157 CRISPR screens"/>
</dbReference>
<dbReference type="CD-CODE" id="DEE660B4">
    <property type="entry name" value="Stress granule"/>
</dbReference>
<dbReference type="ChiTaRS" id="SAMD4A">
    <property type="organism name" value="human"/>
</dbReference>
<dbReference type="GenomeRNAi" id="23034"/>
<dbReference type="Pharos" id="Q9UPU9">
    <property type="development level" value="Tbio"/>
</dbReference>
<dbReference type="PRO" id="PR:Q9UPU9"/>
<dbReference type="Proteomes" id="UP000005640">
    <property type="component" value="Chromosome 14"/>
</dbReference>
<dbReference type="RNAct" id="Q9UPU9">
    <property type="molecule type" value="protein"/>
</dbReference>
<dbReference type="Bgee" id="ENSG00000020577">
    <property type="expression patterns" value="Expressed in dorsal motor nucleus of vagus nerve and 198 other cell types or tissues"/>
</dbReference>
<dbReference type="ExpressionAtlas" id="Q9UPU9">
    <property type="expression patterns" value="baseline and differential"/>
</dbReference>
<dbReference type="GO" id="GO:0030054">
    <property type="term" value="C:cell junction"/>
    <property type="evidence" value="ECO:0000314"/>
    <property type="project" value="HPA"/>
</dbReference>
<dbReference type="GO" id="GO:0005829">
    <property type="term" value="C:cytosol"/>
    <property type="evidence" value="ECO:0000314"/>
    <property type="project" value="HPA"/>
</dbReference>
<dbReference type="GO" id="GO:0030425">
    <property type="term" value="C:dendrite"/>
    <property type="evidence" value="ECO:0007669"/>
    <property type="project" value="UniProtKB-SubCell"/>
</dbReference>
<dbReference type="GO" id="GO:0001650">
    <property type="term" value="C:fibrillar center"/>
    <property type="evidence" value="ECO:0000314"/>
    <property type="project" value="HPA"/>
</dbReference>
<dbReference type="GO" id="GO:0000932">
    <property type="term" value="C:P-body"/>
    <property type="evidence" value="ECO:0000318"/>
    <property type="project" value="GO_Central"/>
</dbReference>
<dbReference type="GO" id="GO:0045202">
    <property type="term" value="C:synapse"/>
    <property type="evidence" value="ECO:0007669"/>
    <property type="project" value="UniProtKB-SubCell"/>
</dbReference>
<dbReference type="GO" id="GO:0003729">
    <property type="term" value="F:mRNA binding"/>
    <property type="evidence" value="ECO:0000318"/>
    <property type="project" value="GO_Central"/>
</dbReference>
<dbReference type="GO" id="GO:0003723">
    <property type="term" value="F:RNA binding"/>
    <property type="evidence" value="ECO:0007005"/>
    <property type="project" value="UniProtKB"/>
</dbReference>
<dbReference type="GO" id="GO:0030371">
    <property type="term" value="F:translation repressor activity"/>
    <property type="evidence" value="ECO:0000314"/>
    <property type="project" value="MGI"/>
</dbReference>
<dbReference type="GO" id="GO:0000289">
    <property type="term" value="P:nuclear-transcribed mRNA poly(A) tail shortening"/>
    <property type="evidence" value="ECO:0000318"/>
    <property type="project" value="GO_Central"/>
</dbReference>
<dbReference type="GO" id="GO:0045727">
    <property type="term" value="P:positive regulation of translation"/>
    <property type="evidence" value="ECO:0000314"/>
    <property type="project" value="MGI"/>
</dbReference>
<dbReference type="CDD" id="cd09557">
    <property type="entry name" value="SAM_Smaug"/>
    <property type="match status" value="1"/>
</dbReference>
<dbReference type="FunFam" id="1.10.150.50:FF:000013">
    <property type="entry name" value="Protein Smaug homolog 1 isoform 2"/>
    <property type="match status" value="1"/>
</dbReference>
<dbReference type="FunFam" id="1.25.40.170:FF:000001">
    <property type="entry name" value="Protein Smaug homolog 1 isoform 2"/>
    <property type="match status" value="1"/>
</dbReference>
<dbReference type="FunFam" id="1.25.40.170:FF:000002">
    <property type="entry name" value="Protein Smaug homolog 1 isoform 2"/>
    <property type="match status" value="1"/>
</dbReference>
<dbReference type="Gene3D" id="1.25.40.170">
    <property type="entry name" value="Smaug, PHAT domain"/>
    <property type="match status" value="2"/>
</dbReference>
<dbReference type="Gene3D" id="1.10.150.50">
    <property type="entry name" value="Transcription Factor, Ets-1"/>
    <property type="match status" value="1"/>
</dbReference>
<dbReference type="InterPro" id="IPR037093">
    <property type="entry name" value="PHAT_dom_sf"/>
</dbReference>
<dbReference type="InterPro" id="IPR001660">
    <property type="entry name" value="SAM"/>
</dbReference>
<dbReference type="InterPro" id="IPR013761">
    <property type="entry name" value="SAM/pointed_sf"/>
</dbReference>
<dbReference type="InterPro" id="IPR050897">
    <property type="entry name" value="SMAUG/VTS1_RNA-bind"/>
</dbReference>
<dbReference type="InterPro" id="IPR037634">
    <property type="entry name" value="Smaug_SAM"/>
</dbReference>
<dbReference type="PANTHER" id="PTHR12515:SF8">
    <property type="entry name" value="PROTEIN SMAUG HOMOLOG 1"/>
    <property type="match status" value="1"/>
</dbReference>
<dbReference type="PANTHER" id="PTHR12515">
    <property type="entry name" value="STERILE ALPHA MOTIF DOMAIN CONTAINING PROTEIN 4-RELATED"/>
    <property type="match status" value="1"/>
</dbReference>
<dbReference type="Pfam" id="PF00536">
    <property type="entry name" value="SAM_1"/>
    <property type="match status" value="1"/>
</dbReference>
<dbReference type="Pfam" id="PF25479">
    <property type="entry name" value="Vts1"/>
    <property type="match status" value="1"/>
</dbReference>
<dbReference type="SMART" id="SM00454">
    <property type="entry name" value="SAM"/>
    <property type="match status" value="1"/>
</dbReference>
<dbReference type="SUPFAM" id="SSF47769">
    <property type="entry name" value="SAM/Pointed domain"/>
    <property type="match status" value="1"/>
</dbReference>
<accession>Q9UPU9</accession>
<accession>A8MPZ5</accession>
<accession>Q0VA96</accession>
<accession>Q6PEW4</accession>
<reference key="1">
    <citation type="journal article" date="2003" name="Nature">
        <title>The DNA sequence and analysis of human chromosome 14.</title>
        <authorList>
            <person name="Heilig R."/>
            <person name="Eckenberg R."/>
            <person name="Petit J.-L."/>
            <person name="Fonknechten N."/>
            <person name="Da Silva C."/>
            <person name="Cattolico L."/>
            <person name="Levy M."/>
            <person name="Barbe V."/>
            <person name="De Berardinis V."/>
            <person name="Ureta-Vidal A."/>
            <person name="Pelletier E."/>
            <person name="Vico V."/>
            <person name="Anthouard V."/>
            <person name="Rowen L."/>
            <person name="Madan A."/>
            <person name="Qin S."/>
            <person name="Sun H."/>
            <person name="Du H."/>
            <person name="Pepin K."/>
            <person name="Artiguenave F."/>
            <person name="Robert C."/>
            <person name="Cruaud C."/>
            <person name="Bruels T."/>
            <person name="Jaillon O."/>
            <person name="Friedlander L."/>
            <person name="Samson G."/>
            <person name="Brottier P."/>
            <person name="Cure S."/>
            <person name="Segurens B."/>
            <person name="Aniere F."/>
            <person name="Samain S."/>
            <person name="Crespeau H."/>
            <person name="Abbasi N."/>
            <person name="Aiach N."/>
            <person name="Boscus D."/>
            <person name="Dickhoff R."/>
            <person name="Dors M."/>
            <person name="Dubois I."/>
            <person name="Friedman C."/>
            <person name="Gouyvenoux M."/>
            <person name="James R."/>
            <person name="Madan A."/>
            <person name="Mairey-Estrada B."/>
            <person name="Mangenot S."/>
            <person name="Martins N."/>
            <person name="Menard M."/>
            <person name="Oztas S."/>
            <person name="Ratcliffe A."/>
            <person name="Shaffer T."/>
            <person name="Trask B."/>
            <person name="Vacherie B."/>
            <person name="Bellemere C."/>
            <person name="Belser C."/>
            <person name="Besnard-Gonnet M."/>
            <person name="Bartol-Mavel D."/>
            <person name="Boutard M."/>
            <person name="Briez-Silla S."/>
            <person name="Combette S."/>
            <person name="Dufosse-Laurent V."/>
            <person name="Ferron C."/>
            <person name="Lechaplais C."/>
            <person name="Louesse C."/>
            <person name="Muselet D."/>
            <person name="Magdelenat G."/>
            <person name="Pateau E."/>
            <person name="Petit E."/>
            <person name="Sirvain-Trukniewicz P."/>
            <person name="Trybou A."/>
            <person name="Vega-Czarny N."/>
            <person name="Bataille E."/>
            <person name="Bluet E."/>
            <person name="Bordelais I."/>
            <person name="Dubois M."/>
            <person name="Dumont C."/>
            <person name="Guerin T."/>
            <person name="Haffray S."/>
            <person name="Hammadi R."/>
            <person name="Muanga J."/>
            <person name="Pellouin V."/>
            <person name="Robert D."/>
            <person name="Wunderle E."/>
            <person name="Gauguet G."/>
            <person name="Roy A."/>
            <person name="Sainte-Marthe L."/>
            <person name="Verdier J."/>
            <person name="Verdier-Discala C."/>
            <person name="Hillier L.W."/>
            <person name="Fulton L."/>
            <person name="McPherson J."/>
            <person name="Matsuda F."/>
            <person name="Wilson R."/>
            <person name="Scarpelli C."/>
            <person name="Gyapay G."/>
            <person name="Wincker P."/>
            <person name="Saurin W."/>
            <person name="Quetier F."/>
            <person name="Waterston R."/>
            <person name="Hood L."/>
            <person name="Weissenbach J."/>
        </authorList>
    </citation>
    <scope>NUCLEOTIDE SEQUENCE [LARGE SCALE GENOMIC DNA]</scope>
</reference>
<reference key="2">
    <citation type="submission" date="2001-10" db="EMBL/GenBank/DDBJ databases">
        <authorList>
            <person name="Guo J.H."/>
            <person name="Yu L."/>
        </authorList>
    </citation>
    <scope>NUCLEOTIDE SEQUENCE [LARGE SCALE MRNA] OF 1-238 (ISOFORM 2)</scope>
</reference>
<reference key="3">
    <citation type="journal article" date="2004" name="Genome Res.">
        <title>The status, quality, and expansion of the NIH full-length cDNA project: the Mammalian Gene Collection (MGC).</title>
        <authorList>
            <consortium name="The MGC Project Team"/>
        </authorList>
    </citation>
    <scope>NUCLEOTIDE SEQUENCE [LARGE SCALE MRNA] OF 1-238 (ISOFORM 1)</scope>
    <scope>NUCLEOTIDE SEQUENCE [LARGE SCALE MRNA] OF 2-718 (ISOFORM 3)</scope>
    <source>
        <tissue>Placenta</tissue>
    </source>
</reference>
<reference key="4">
    <citation type="journal article" date="2004" name="Nat. Genet.">
        <title>Complete sequencing and characterization of 21,243 full-length human cDNAs.</title>
        <authorList>
            <person name="Ota T."/>
            <person name="Suzuki Y."/>
            <person name="Nishikawa T."/>
            <person name="Otsuki T."/>
            <person name="Sugiyama T."/>
            <person name="Irie R."/>
            <person name="Wakamatsu A."/>
            <person name="Hayashi K."/>
            <person name="Sato H."/>
            <person name="Nagai K."/>
            <person name="Kimura K."/>
            <person name="Makita H."/>
            <person name="Sekine M."/>
            <person name="Obayashi M."/>
            <person name="Nishi T."/>
            <person name="Shibahara T."/>
            <person name="Tanaka T."/>
            <person name="Ishii S."/>
            <person name="Yamamoto J."/>
            <person name="Saito K."/>
            <person name="Kawai Y."/>
            <person name="Isono Y."/>
            <person name="Nakamura Y."/>
            <person name="Nagahari K."/>
            <person name="Murakami K."/>
            <person name="Yasuda T."/>
            <person name="Iwayanagi T."/>
            <person name="Wagatsuma M."/>
            <person name="Shiratori A."/>
            <person name="Sudo H."/>
            <person name="Hosoiri T."/>
            <person name="Kaku Y."/>
            <person name="Kodaira H."/>
            <person name="Kondo H."/>
            <person name="Sugawara M."/>
            <person name="Takahashi M."/>
            <person name="Kanda K."/>
            <person name="Yokoi T."/>
            <person name="Furuya T."/>
            <person name="Kikkawa E."/>
            <person name="Omura Y."/>
            <person name="Abe K."/>
            <person name="Kamihara K."/>
            <person name="Katsuta N."/>
            <person name="Sato K."/>
            <person name="Tanikawa M."/>
            <person name="Yamazaki M."/>
            <person name="Ninomiya K."/>
            <person name="Ishibashi T."/>
            <person name="Yamashita H."/>
            <person name="Murakawa K."/>
            <person name="Fujimori K."/>
            <person name="Tanai H."/>
            <person name="Kimata M."/>
            <person name="Watanabe M."/>
            <person name="Hiraoka S."/>
            <person name="Chiba Y."/>
            <person name="Ishida S."/>
            <person name="Ono Y."/>
            <person name="Takiguchi S."/>
            <person name="Watanabe S."/>
            <person name="Yosida M."/>
            <person name="Hotuta T."/>
            <person name="Kusano J."/>
            <person name="Kanehori K."/>
            <person name="Takahashi-Fujii A."/>
            <person name="Hara H."/>
            <person name="Tanase T.-O."/>
            <person name="Nomura Y."/>
            <person name="Togiya S."/>
            <person name="Komai F."/>
            <person name="Hara R."/>
            <person name="Takeuchi K."/>
            <person name="Arita M."/>
            <person name="Imose N."/>
            <person name="Musashino K."/>
            <person name="Yuuki H."/>
            <person name="Oshima A."/>
            <person name="Sasaki N."/>
            <person name="Aotsuka S."/>
            <person name="Yoshikawa Y."/>
            <person name="Matsunawa H."/>
            <person name="Ichihara T."/>
            <person name="Shiohata N."/>
            <person name="Sano S."/>
            <person name="Moriya S."/>
            <person name="Momiyama H."/>
            <person name="Satoh N."/>
            <person name="Takami S."/>
            <person name="Terashima Y."/>
            <person name="Suzuki O."/>
            <person name="Nakagawa S."/>
            <person name="Senoh A."/>
            <person name="Mizoguchi H."/>
            <person name="Goto Y."/>
            <person name="Shimizu F."/>
            <person name="Wakebe H."/>
            <person name="Hishigaki H."/>
            <person name="Watanabe T."/>
            <person name="Sugiyama A."/>
            <person name="Takemoto M."/>
            <person name="Kawakami B."/>
            <person name="Yamazaki M."/>
            <person name="Watanabe K."/>
            <person name="Kumagai A."/>
            <person name="Itakura S."/>
            <person name="Fukuzumi Y."/>
            <person name="Fujimori Y."/>
            <person name="Komiyama M."/>
            <person name="Tashiro H."/>
            <person name="Tanigami A."/>
            <person name="Fujiwara T."/>
            <person name="Ono T."/>
            <person name="Yamada K."/>
            <person name="Fujii Y."/>
            <person name="Ozaki K."/>
            <person name="Hirao M."/>
            <person name="Ohmori Y."/>
            <person name="Kawabata A."/>
            <person name="Hikiji T."/>
            <person name="Kobatake N."/>
            <person name="Inagaki H."/>
            <person name="Ikema Y."/>
            <person name="Okamoto S."/>
            <person name="Okitani R."/>
            <person name="Kawakami T."/>
            <person name="Noguchi S."/>
            <person name="Itoh T."/>
            <person name="Shigeta K."/>
            <person name="Senba T."/>
            <person name="Matsumura K."/>
            <person name="Nakajima Y."/>
            <person name="Mizuno T."/>
            <person name="Morinaga M."/>
            <person name="Sasaki M."/>
            <person name="Togashi T."/>
            <person name="Oyama M."/>
            <person name="Hata H."/>
            <person name="Watanabe M."/>
            <person name="Komatsu T."/>
            <person name="Mizushima-Sugano J."/>
            <person name="Satoh T."/>
            <person name="Shirai Y."/>
            <person name="Takahashi Y."/>
            <person name="Nakagawa K."/>
            <person name="Okumura K."/>
            <person name="Nagase T."/>
            <person name="Nomura N."/>
            <person name="Kikuchi H."/>
            <person name="Masuho Y."/>
            <person name="Yamashita R."/>
            <person name="Nakai K."/>
            <person name="Yada T."/>
            <person name="Nakamura Y."/>
            <person name="Ohara O."/>
            <person name="Isogai T."/>
            <person name="Sugano S."/>
        </authorList>
    </citation>
    <scope>NUCLEOTIDE SEQUENCE [LARGE SCALE MRNA] OF 2-718 (ISOFORM 1)</scope>
</reference>
<reference key="5">
    <citation type="journal article" date="1999" name="DNA Res.">
        <title>Prediction of the coding sequences of unidentified human genes. XIV. The complete sequences of 100 new cDNA clones from brain which code for large proteins in vitro.</title>
        <authorList>
            <person name="Kikuno R."/>
            <person name="Nagase T."/>
            <person name="Ishikawa K."/>
            <person name="Hirosawa M."/>
            <person name="Miyajima N."/>
            <person name="Tanaka A."/>
            <person name="Kotani H."/>
            <person name="Nomura N."/>
            <person name="Ohara O."/>
        </authorList>
    </citation>
    <scope>NUCLEOTIDE SEQUENCE [LARGE SCALE MRNA] OF 123-718 (ISOFORM 3)</scope>
    <source>
        <tissue>Brain</tissue>
    </source>
</reference>
<reference key="6">
    <citation type="journal article" date="2005" name="J. Biol. Chem.">
        <title>Mammalian Smaug is a translational repressor that forms cytoplasmic foci similar to stress granules.</title>
        <authorList>
            <person name="Baez M.V."/>
            <person name="Boccaccio G.L."/>
        </authorList>
    </citation>
    <scope>FUNCTION</scope>
    <scope>SUBCELLULAR LOCATION</scope>
</reference>
<reference key="7">
    <citation type="journal article" date="2008" name="Proc. Natl. Acad. Sci. U.S.A.">
        <title>A quantitative atlas of mitotic phosphorylation.</title>
        <authorList>
            <person name="Dephoure N."/>
            <person name="Zhou C."/>
            <person name="Villen J."/>
            <person name="Beausoleil S.A."/>
            <person name="Bakalarski C.E."/>
            <person name="Elledge S.J."/>
            <person name="Gygi S.P."/>
        </authorList>
    </citation>
    <scope>PHOSPHORYLATION [LARGE SCALE ANALYSIS] AT SER-420 AND THR-424</scope>
    <scope>IDENTIFICATION BY MASS SPECTROMETRY [LARGE SCALE ANALYSIS]</scope>
    <source>
        <tissue>Cervix carcinoma</tissue>
    </source>
</reference>
<reference key="8">
    <citation type="journal article" date="2013" name="J. Proteome Res.">
        <title>Toward a comprehensive characterization of a human cancer cell phosphoproteome.</title>
        <authorList>
            <person name="Zhou H."/>
            <person name="Di Palma S."/>
            <person name="Preisinger C."/>
            <person name="Peng M."/>
            <person name="Polat A.N."/>
            <person name="Heck A.J."/>
            <person name="Mohammed S."/>
        </authorList>
    </citation>
    <scope>PHOSPHORYLATION [LARGE SCALE ANALYSIS] AT SER-168</scope>
    <scope>IDENTIFICATION BY MASS SPECTROMETRY [LARGE SCALE ANALYSIS]</scope>
    <source>
        <tissue>Cervix carcinoma</tissue>
        <tissue>Erythroleukemia</tissue>
    </source>
</reference>
<organism>
    <name type="scientific">Homo sapiens</name>
    <name type="common">Human</name>
    <dbReference type="NCBI Taxonomy" id="9606"/>
    <lineage>
        <taxon>Eukaryota</taxon>
        <taxon>Metazoa</taxon>
        <taxon>Chordata</taxon>
        <taxon>Craniata</taxon>
        <taxon>Vertebrata</taxon>
        <taxon>Euteleostomi</taxon>
        <taxon>Mammalia</taxon>
        <taxon>Eutheria</taxon>
        <taxon>Euarchontoglires</taxon>
        <taxon>Primates</taxon>
        <taxon>Haplorrhini</taxon>
        <taxon>Catarrhini</taxon>
        <taxon>Hominidae</taxon>
        <taxon>Homo</taxon>
    </lineage>
</organism>
<gene>
    <name type="primary">SAMD4A</name>
    <name type="synonym">KIAA1053</name>
    <name type="synonym">SAMD4</name>
    <name type="synonym">SMAUG1</name>
</gene>
<proteinExistence type="evidence at protein level"/>
<comment type="function">
    <text evidence="5">Acts as a translational repressor of SRE-containing messengers.</text>
</comment>
<comment type="interaction">
    <interactant intactId="EBI-1047497">
        <id>Q9UPU9</id>
    </interactant>
    <interactant intactId="EBI-618309">
        <id>Q08379</id>
        <label>GOLGA2</label>
    </interactant>
    <organismsDiffer>false</organismsDiffer>
    <experiments>3</experiments>
</comment>
<comment type="interaction">
    <interactant intactId="EBI-1047497">
        <id>Q9UPU9</id>
    </interactant>
    <interactant intactId="EBI-10178410">
        <id>Q86Y26</id>
        <label>NUTM1</label>
    </interactant>
    <organismsDiffer>false</organismsDiffer>
    <experiments>3</experiments>
</comment>
<comment type="interaction">
    <interactant intactId="EBI-1047497">
        <id>Q9UPU9</id>
    </interactant>
    <interactant intactId="EBI-476295">
        <id>P31947</id>
        <label>SFN</label>
    </interactant>
    <organismsDiffer>false</organismsDiffer>
    <experiments>4</experiments>
</comment>
<comment type="interaction">
    <interactant intactId="EBI-1047497">
        <id>Q9UPU9</id>
    </interactant>
    <interactant intactId="EBI-356498">
        <id>P62258</id>
        <label>YWHAE</label>
    </interactant>
    <organismsDiffer>false</organismsDiffer>
    <experiments>5</experiments>
</comment>
<comment type="interaction">
    <interactant intactId="EBI-1047497">
        <id>Q9UPU9</id>
    </interactant>
    <interactant intactId="EBI-359832">
        <id>P61981</id>
        <label>YWHAG</label>
    </interactant>
    <organismsDiffer>false</organismsDiffer>
    <experiments>5</experiments>
</comment>
<comment type="interaction">
    <interactant intactId="EBI-11986417">
        <id>Q9UPU9-3</id>
    </interactant>
    <interactant intactId="EBI-357530">
        <id>Q9ULX6</id>
        <label>AKAP8L</label>
    </interactant>
    <organismsDiffer>false</organismsDiffer>
    <experiments>3</experiments>
</comment>
<comment type="interaction">
    <interactant intactId="EBI-11986417">
        <id>Q9UPU9-3</id>
    </interactant>
    <interactant intactId="EBI-10215533">
        <id>Q9H9E1</id>
        <label>ANKRA2</label>
    </interactant>
    <organismsDiffer>false</organismsDiffer>
    <experiments>3</experiments>
</comment>
<comment type="interaction">
    <interactant intactId="EBI-11986417">
        <id>Q9UPU9-3</id>
    </interactant>
    <interactant intactId="EBI-2949658">
        <id>O95429</id>
        <label>BAG4</label>
    </interactant>
    <organismsDiffer>false</organismsDiffer>
    <experiments>3</experiments>
</comment>
<comment type="interaction">
    <interactant intactId="EBI-11986417">
        <id>Q9UPU9-3</id>
    </interactant>
    <interactant intactId="EBI-7116203">
        <id>O75031</id>
        <label>HSF2BP</label>
    </interactant>
    <organismsDiffer>false</organismsDiffer>
    <experiments>3</experiments>
</comment>
<comment type="interaction">
    <interactant intactId="EBI-11986417">
        <id>Q9UPU9-3</id>
    </interactant>
    <interactant intactId="EBI-16439278">
        <id>Q6FHY5</id>
        <label>MEOX2</label>
    </interactant>
    <organismsDiffer>false</organismsDiffer>
    <experiments>3</experiments>
</comment>
<comment type="interaction">
    <interactant intactId="EBI-11986417">
        <id>Q9UPU9-3</id>
    </interactant>
    <interactant intactId="EBI-11522433">
        <id>Q5JR59-3</id>
        <label>MTUS2</label>
    </interactant>
    <organismsDiffer>false</organismsDiffer>
    <experiments>3</experiments>
</comment>
<comment type="interaction">
    <interactant intactId="EBI-11986417">
        <id>Q9UPU9-3</id>
    </interactant>
    <interactant intactId="EBI-10271199">
        <id>Q8NI38</id>
        <label>NFKBID</label>
    </interactant>
    <organismsDiffer>false</organismsDiffer>
    <experiments>3</experiments>
</comment>
<comment type="interaction">
    <interactant intactId="EBI-11986417">
        <id>Q9UPU9-3</id>
    </interactant>
    <interactant intactId="EBI-11320284">
        <id>Q9NQX0</id>
        <label>PRDM6</label>
    </interactant>
    <organismsDiffer>false</organismsDiffer>
    <experiments>3</experiments>
</comment>
<comment type="interaction">
    <interactant intactId="EBI-11986417">
        <id>Q9UPU9-3</id>
    </interactant>
    <interactant intactId="EBI-1053424">
        <id>O43741</id>
        <label>PRKAB2</label>
    </interactant>
    <organismsDiffer>false</organismsDiffer>
    <experiments>3</experiments>
</comment>
<comment type="interaction">
    <interactant intactId="EBI-11986417">
        <id>Q9UPU9-3</id>
    </interactant>
    <interactant intactId="EBI-12018146">
        <id>Q8IYX1</id>
        <label>TBC1D21</label>
    </interactant>
    <organismsDiffer>false</organismsDiffer>
    <experiments>3</experiments>
</comment>
<comment type="subcellular location">
    <subcellularLocation>
        <location evidence="5">Cytoplasm</location>
    </subcellularLocation>
    <subcellularLocation>
        <location evidence="1">Cell projection</location>
        <location evidence="1">Dendrite</location>
    </subcellularLocation>
    <subcellularLocation>
        <location evidence="1">Synapse</location>
        <location evidence="1">Synaptosome</location>
    </subcellularLocation>
    <text evidence="1">Enriched in synaptoneurosomes (By similarity). Shuttles between the nucleus and the cytoplasm in a CRM1-dependent manner. Colocalizes throughout the cytoplasm in granules with polyadenylated RNAs, PABPC1 and STAU1. Also frequently colocalizes in cytoplasmic stress granule-like foci with ELAVL1, TIA1 and TIAL1.</text>
</comment>
<comment type="alternative products">
    <event type="alternative splicing"/>
    <isoform>
        <id>Q9UPU9-1</id>
        <name>1</name>
        <sequence type="displayed"/>
    </isoform>
    <isoform>
        <id>Q9UPU9-2</id>
        <name>2</name>
        <sequence type="described" ref="VSP_037778"/>
    </isoform>
    <isoform>
        <id>Q9UPU9-3</id>
        <name>3</name>
        <sequence type="described" ref="VSP_037779"/>
    </isoform>
</comment>
<comment type="similarity">
    <text evidence="9">Belongs to the SMAUG family.</text>
</comment>
<comment type="sequence caution" evidence="9">
    <conflict type="miscellaneous discrepancy">
        <sequence resource="EMBL-CDS" id="AAH57838"/>
    </conflict>
    <text>Intron retention.</text>
</comment>
<comment type="sequence caution" evidence="9">
    <conflict type="miscellaneous discrepancy">
        <sequence resource="EMBL-CDS" id="AAP97302"/>
    </conflict>
    <text>Intron retention.</text>
</comment>
<name>SMAG1_HUMAN</name>
<keyword id="KW-0002">3D-structure</keyword>
<keyword id="KW-0025">Alternative splicing</keyword>
<keyword id="KW-0966">Cell projection</keyword>
<keyword id="KW-0963">Cytoplasm</keyword>
<keyword id="KW-0488">Methylation</keyword>
<keyword id="KW-0597">Phosphoprotein</keyword>
<keyword id="KW-1267">Proteomics identification</keyword>
<keyword id="KW-1185">Reference proteome</keyword>
<keyword id="KW-0678">Repressor</keyword>
<keyword id="KW-0770">Synapse</keyword>
<keyword id="KW-0771">Synaptosome</keyword>
<keyword id="KW-0810">Translation regulation</keyword>